<dbReference type="EC" id="3.1.1.96" evidence="1"/>
<dbReference type="EMBL" id="CP000920">
    <property type="protein sequence ID" value="ACO21356.1"/>
    <property type="molecule type" value="Genomic_DNA"/>
</dbReference>
<dbReference type="RefSeq" id="WP_000691398.1">
    <property type="nucleotide sequence ID" value="NC_012467.1"/>
</dbReference>
<dbReference type="SMR" id="C1CLY4"/>
<dbReference type="KEGG" id="spp:SPP_1663"/>
<dbReference type="HOGENOM" id="CLU_076901_1_0_9"/>
<dbReference type="GO" id="GO:0005737">
    <property type="term" value="C:cytoplasm"/>
    <property type="evidence" value="ECO:0007669"/>
    <property type="project" value="UniProtKB-SubCell"/>
</dbReference>
<dbReference type="GO" id="GO:0051500">
    <property type="term" value="F:D-tyrosyl-tRNA(Tyr) deacylase activity"/>
    <property type="evidence" value="ECO:0007669"/>
    <property type="project" value="TreeGrafter"/>
</dbReference>
<dbReference type="GO" id="GO:0106026">
    <property type="term" value="F:Gly-tRNA(Ala) deacylase activity"/>
    <property type="evidence" value="ECO:0007669"/>
    <property type="project" value="UniProtKB-UniRule"/>
</dbReference>
<dbReference type="GO" id="GO:0043908">
    <property type="term" value="F:Ser(Gly)-tRNA(Ala) hydrolase activity"/>
    <property type="evidence" value="ECO:0007669"/>
    <property type="project" value="UniProtKB-UniRule"/>
</dbReference>
<dbReference type="GO" id="GO:0000049">
    <property type="term" value="F:tRNA binding"/>
    <property type="evidence" value="ECO:0007669"/>
    <property type="project" value="UniProtKB-UniRule"/>
</dbReference>
<dbReference type="GO" id="GO:0019478">
    <property type="term" value="P:D-amino acid catabolic process"/>
    <property type="evidence" value="ECO:0007669"/>
    <property type="project" value="UniProtKB-UniRule"/>
</dbReference>
<dbReference type="CDD" id="cd00563">
    <property type="entry name" value="Dtyr_deacylase"/>
    <property type="match status" value="1"/>
</dbReference>
<dbReference type="FunFam" id="3.50.80.10:FF:000001">
    <property type="entry name" value="D-aminoacyl-tRNA deacylase"/>
    <property type="match status" value="1"/>
</dbReference>
<dbReference type="Gene3D" id="3.50.80.10">
    <property type="entry name" value="D-tyrosyl-tRNA(Tyr) deacylase"/>
    <property type="match status" value="1"/>
</dbReference>
<dbReference type="HAMAP" id="MF_00518">
    <property type="entry name" value="Deacylase_Dtd"/>
    <property type="match status" value="1"/>
</dbReference>
<dbReference type="InterPro" id="IPR003732">
    <property type="entry name" value="Daa-tRNA_deacyls_DTD"/>
</dbReference>
<dbReference type="InterPro" id="IPR023509">
    <property type="entry name" value="DTD-like_sf"/>
</dbReference>
<dbReference type="NCBIfam" id="TIGR00256">
    <property type="entry name" value="D-aminoacyl-tRNA deacylase"/>
    <property type="match status" value="1"/>
</dbReference>
<dbReference type="PANTHER" id="PTHR10472:SF5">
    <property type="entry name" value="D-AMINOACYL-TRNA DEACYLASE 1"/>
    <property type="match status" value="1"/>
</dbReference>
<dbReference type="PANTHER" id="PTHR10472">
    <property type="entry name" value="D-TYROSYL-TRNA TYR DEACYLASE"/>
    <property type="match status" value="1"/>
</dbReference>
<dbReference type="Pfam" id="PF02580">
    <property type="entry name" value="Tyr_Deacylase"/>
    <property type="match status" value="1"/>
</dbReference>
<dbReference type="SUPFAM" id="SSF69500">
    <property type="entry name" value="DTD-like"/>
    <property type="match status" value="1"/>
</dbReference>
<feature type="chain" id="PRO_1000146217" description="D-aminoacyl-tRNA deacylase">
    <location>
        <begin position="1"/>
        <end position="147"/>
    </location>
</feature>
<feature type="short sequence motif" description="Gly-cisPro motif, important for rejection of L-amino acids" evidence="1">
    <location>
        <begin position="136"/>
        <end position="137"/>
    </location>
</feature>
<evidence type="ECO:0000255" key="1">
    <source>
        <dbReference type="HAMAP-Rule" id="MF_00518"/>
    </source>
</evidence>
<proteinExistence type="inferred from homology"/>
<accession>C1CLY4</accession>
<sequence length="147" mass="16248">MKIIIQRVKKAQVSIEGQIQGKINQGFLLLVGVGPEDQEEDLDYAVRKLVNMRIFSDAEGKMNLSVKDIEGEILSISQFTLFADTKKGNRPAFTGAAKPDMASDFYDAFNQKLAQEVPVQTGIFGADMQVELVNNGPVTIILDTKKR</sequence>
<keyword id="KW-0963">Cytoplasm</keyword>
<keyword id="KW-0378">Hydrolase</keyword>
<keyword id="KW-0694">RNA-binding</keyword>
<keyword id="KW-0820">tRNA-binding</keyword>
<protein>
    <recommendedName>
        <fullName evidence="1">D-aminoacyl-tRNA deacylase</fullName>
        <shortName evidence="1">DTD</shortName>
        <ecNumber evidence="1">3.1.1.96</ecNumber>
    </recommendedName>
    <alternativeName>
        <fullName evidence="1">Gly-tRNA(Ala) deacylase</fullName>
    </alternativeName>
</protein>
<name>DTD_STRZP</name>
<organism>
    <name type="scientific">Streptococcus pneumoniae (strain P1031)</name>
    <dbReference type="NCBI Taxonomy" id="488223"/>
    <lineage>
        <taxon>Bacteria</taxon>
        <taxon>Bacillati</taxon>
        <taxon>Bacillota</taxon>
        <taxon>Bacilli</taxon>
        <taxon>Lactobacillales</taxon>
        <taxon>Streptococcaceae</taxon>
        <taxon>Streptococcus</taxon>
    </lineage>
</organism>
<gene>
    <name evidence="1" type="primary">dtd</name>
    <name type="ordered locus">SPP_1663</name>
</gene>
<comment type="function">
    <text evidence="1">An aminoacyl-tRNA editing enzyme that deacylates mischarged D-aminoacyl-tRNAs. Also deacylates mischarged glycyl-tRNA(Ala), protecting cells against glycine mischarging by AlaRS. Acts via tRNA-based rather than protein-based catalysis; rejects L-amino acids rather than detecting D-amino acids in the active site. By recycling D-aminoacyl-tRNA to D-amino acids and free tRNA molecules, this enzyme counteracts the toxicity associated with the formation of D-aminoacyl-tRNA entities in vivo and helps enforce protein L-homochirality.</text>
</comment>
<comment type="catalytic activity">
    <reaction evidence="1">
        <text>glycyl-tRNA(Ala) + H2O = tRNA(Ala) + glycine + H(+)</text>
        <dbReference type="Rhea" id="RHEA:53744"/>
        <dbReference type="Rhea" id="RHEA-COMP:9657"/>
        <dbReference type="Rhea" id="RHEA-COMP:13640"/>
        <dbReference type="ChEBI" id="CHEBI:15377"/>
        <dbReference type="ChEBI" id="CHEBI:15378"/>
        <dbReference type="ChEBI" id="CHEBI:57305"/>
        <dbReference type="ChEBI" id="CHEBI:78442"/>
        <dbReference type="ChEBI" id="CHEBI:78522"/>
        <dbReference type="EC" id="3.1.1.96"/>
    </reaction>
</comment>
<comment type="catalytic activity">
    <reaction evidence="1">
        <text>a D-aminoacyl-tRNA + H2O = a tRNA + a D-alpha-amino acid + H(+)</text>
        <dbReference type="Rhea" id="RHEA:13953"/>
        <dbReference type="Rhea" id="RHEA-COMP:10123"/>
        <dbReference type="Rhea" id="RHEA-COMP:10124"/>
        <dbReference type="ChEBI" id="CHEBI:15377"/>
        <dbReference type="ChEBI" id="CHEBI:15378"/>
        <dbReference type="ChEBI" id="CHEBI:59871"/>
        <dbReference type="ChEBI" id="CHEBI:78442"/>
        <dbReference type="ChEBI" id="CHEBI:79333"/>
        <dbReference type="EC" id="3.1.1.96"/>
    </reaction>
</comment>
<comment type="subunit">
    <text evidence="1">Homodimer.</text>
</comment>
<comment type="subcellular location">
    <subcellularLocation>
        <location evidence="1">Cytoplasm</location>
    </subcellularLocation>
</comment>
<comment type="domain">
    <text evidence="1">A Gly-cisPro motif from one monomer fits into the active site of the other monomer to allow specific chiral rejection of L-amino acids.</text>
</comment>
<comment type="similarity">
    <text evidence="1">Belongs to the DTD family.</text>
</comment>
<reference key="1">
    <citation type="journal article" date="2010" name="Genome Biol.">
        <title>Structure and dynamics of the pan-genome of Streptococcus pneumoniae and closely related species.</title>
        <authorList>
            <person name="Donati C."/>
            <person name="Hiller N.L."/>
            <person name="Tettelin H."/>
            <person name="Muzzi A."/>
            <person name="Croucher N.J."/>
            <person name="Angiuoli S.V."/>
            <person name="Oggioni M."/>
            <person name="Dunning Hotopp J.C."/>
            <person name="Hu F.Z."/>
            <person name="Riley D.R."/>
            <person name="Covacci A."/>
            <person name="Mitchell T.J."/>
            <person name="Bentley S.D."/>
            <person name="Kilian M."/>
            <person name="Ehrlich G.D."/>
            <person name="Rappuoli R."/>
            <person name="Moxon E.R."/>
            <person name="Masignani V."/>
        </authorList>
    </citation>
    <scope>NUCLEOTIDE SEQUENCE [LARGE SCALE GENOMIC DNA]</scope>
    <source>
        <strain>P1031</strain>
    </source>
</reference>